<feature type="chain" id="PRO_0000077195" description="Large ribosomal subunit protein uL3">
    <location>
        <begin position="1"/>
        <end position="215"/>
    </location>
</feature>
<feature type="modified residue" description="N5-methylglutamine" evidence="1">
    <location>
        <position position="156"/>
    </location>
</feature>
<reference key="1">
    <citation type="journal article" date="2003" name="J. Bacteriol.">
        <title>Comparative analyses of the complete genome sequences of Pierce's disease and citrus variegated chlorosis strains of Xylella fastidiosa.</title>
        <authorList>
            <person name="Van Sluys M.A."/>
            <person name="de Oliveira M.C."/>
            <person name="Monteiro-Vitorello C.B."/>
            <person name="Miyaki C.Y."/>
            <person name="Furlan L.R."/>
            <person name="Camargo L.E.A."/>
            <person name="da Silva A.C.R."/>
            <person name="Moon D.H."/>
            <person name="Takita M.A."/>
            <person name="Lemos E.G.M."/>
            <person name="Machado M.A."/>
            <person name="Ferro M.I.T."/>
            <person name="da Silva F.R."/>
            <person name="Goldman M.H.S."/>
            <person name="Goldman G.H."/>
            <person name="Lemos M.V.F."/>
            <person name="El-Dorry H."/>
            <person name="Tsai S.M."/>
            <person name="Carrer H."/>
            <person name="Carraro D.M."/>
            <person name="de Oliveira R.C."/>
            <person name="Nunes L.R."/>
            <person name="Siqueira W.J."/>
            <person name="Coutinho L.L."/>
            <person name="Kimura E.T."/>
            <person name="Ferro E.S."/>
            <person name="Harakava R."/>
            <person name="Kuramae E.E."/>
            <person name="Marino C.L."/>
            <person name="Giglioti E."/>
            <person name="Abreu I.L."/>
            <person name="Alves L.M.C."/>
            <person name="do Amaral A.M."/>
            <person name="Baia G.S."/>
            <person name="Blanco S.R."/>
            <person name="Brito M.S."/>
            <person name="Cannavan F.S."/>
            <person name="Celestino A.V."/>
            <person name="da Cunha A.F."/>
            <person name="Fenille R.C."/>
            <person name="Ferro J.A."/>
            <person name="Formighieri E.F."/>
            <person name="Kishi L.T."/>
            <person name="Leoni S.G."/>
            <person name="Oliveira A.R."/>
            <person name="Rosa V.E. Jr."/>
            <person name="Sassaki F.T."/>
            <person name="Sena J.A.D."/>
            <person name="de Souza A.A."/>
            <person name="Truffi D."/>
            <person name="Tsukumo F."/>
            <person name="Yanai G.M."/>
            <person name="Zaros L.G."/>
            <person name="Civerolo E.L."/>
            <person name="Simpson A.J.G."/>
            <person name="Almeida N.F. Jr."/>
            <person name="Setubal J.C."/>
            <person name="Kitajima J.P."/>
        </authorList>
    </citation>
    <scope>NUCLEOTIDE SEQUENCE [LARGE SCALE GENOMIC DNA]</scope>
    <source>
        <strain>Temecula1 / ATCC 700964</strain>
    </source>
</reference>
<name>RL3_XYLFT</name>
<organism>
    <name type="scientific">Xylella fastidiosa (strain Temecula1 / ATCC 700964)</name>
    <dbReference type="NCBI Taxonomy" id="183190"/>
    <lineage>
        <taxon>Bacteria</taxon>
        <taxon>Pseudomonadati</taxon>
        <taxon>Pseudomonadota</taxon>
        <taxon>Gammaproteobacteria</taxon>
        <taxon>Lysobacterales</taxon>
        <taxon>Lysobacteraceae</taxon>
        <taxon>Xylella</taxon>
    </lineage>
</organism>
<gene>
    <name evidence="1" type="primary">rplC</name>
    <name type="ordered locus">PD_0437</name>
</gene>
<sequence>MGCYSMGFVGRKAGMSRVFLEDGCSIPVTLIEATANRVVQIKTSDVDGYDAVQVTVGSRRSVLVNKPESGHFAKAKVEAGRGLWEFRVEKTQLGSYSVGSEVGLSIFAVGQKVDIQGITKGKGFQGTIKRHNFRMGDATHGNSLSHRAPGSLGQRQTPGRVFPGKKMSGHMGAVKQSVQNLEVIKIDVERCLIAVRGAIPGASGGDVLIRSASKI</sequence>
<comment type="function">
    <text evidence="1">One of the primary rRNA binding proteins, it binds directly near the 3'-end of the 23S rRNA, where it nucleates assembly of the 50S subunit.</text>
</comment>
<comment type="subunit">
    <text evidence="1">Part of the 50S ribosomal subunit. Forms a cluster with proteins L14 and L19.</text>
</comment>
<comment type="PTM">
    <text evidence="1">Methylated by PrmB.</text>
</comment>
<comment type="similarity">
    <text evidence="1">Belongs to the universal ribosomal protein uL3 family.</text>
</comment>
<dbReference type="EMBL" id="AE009442">
    <property type="protein sequence ID" value="AAO28316.1"/>
    <property type="molecule type" value="Genomic_DNA"/>
</dbReference>
<dbReference type="RefSeq" id="WP_004090088.1">
    <property type="nucleotide sequence ID" value="NC_004556.1"/>
</dbReference>
<dbReference type="SMR" id="Q87E82"/>
<dbReference type="KEGG" id="xft:PD_0437"/>
<dbReference type="HOGENOM" id="CLU_044142_4_1_6"/>
<dbReference type="Proteomes" id="UP000002516">
    <property type="component" value="Chromosome"/>
</dbReference>
<dbReference type="GO" id="GO:0022625">
    <property type="term" value="C:cytosolic large ribosomal subunit"/>
    <property type="evidence" value="ECO:0007669"/>
    <property type="project" value="TreeGrafter"/>
</dbReference>
<dbReference type="GO" id="GO:0019843">
    <property type="term" value="F:rRNA binding"/>
    <property type="evidence" value="ECO:0007669"/>
    <property type="project" value="UniProtKB-UniRule"/>
</dbReference>
<dbReference type="GO" id="GO:0003735">
    <property type="term" value="F:structural constituent of ribosome"/>
    <property type="evidence" value="ECO:0007669"/>
    <property type="project" value="InterPro"/>
</dbReference>
<dbReference type="GO" id="GO:0006412">
    <property type="term" value="P:translation"/>
    <property type="evidence" value="ECO:0007669"/>
    <property type="project" value="UniProtKB-UniRule"/>
</dbReference>
<dbReference type="FunFam" id="2.40.30.10:FF:000004">
    <property type="entry name" value="50S ribosomal protein L3"/>
    <property type="match status" value="1"/>
</dbReference>
<dbReference type="FunFam" id="3.30.160.810:FF:000001">
    <property type="entry name" value="50S ribosomal protein L3"/>
    <property type="match status" value="1"/>
</dbReference>
<dbReference type="Gene3D" id="3.30.160.810">
    <property type="match status" value="1"/>
</dbReference>
<dbReference type="Gene3D" id="2.40.30.10">
    <property type="entry name" value="Translation factors"/>
    <property type="match status" value="1"/>
</dbReference>
<dbReference type="HAMAP" id="MF_01325_B">
    <property type="entry name" value="Ribosomal_uL3_B"/>
    <property type="match status" value="1"/>
</dbReference>
<dbReference type="InterPro" id="IPR000597">
    <property type="entry name" value="Ribosomal_uL3"/>
</dbReference>
<dbReference type="InterPro" id="IPR019927">
    <property type="entry name" value="Ribosomal_uL3_bac/org-type"/>
</dbReference>
<dbReference type="InterPro" id="IPR019926">
    <property type="entry name" value="Ribosomal_uL3_CS"/>
</dbReference>
<dbReference type="InterPro" id="IPR009000">
    <property type="entry name" value="Transl_B-barrel_sf"/>
</dbReference>
<dbReference type="NCBIfam" id="TIGR03625">
    <property type="entry name" value="L3_bact"/>
    <property type="match status" value="1"/>
</dbReference>
<dbReference type="PANTHER" id="PTHR11229">
    <property type="entry name" value="50S RIBOSOMAL PROTEIN L3"/>
    <property type="match status" value="1"/>
</dbReference>
<dbReference type="PANTHER" id="PTHR11229:SF16">
    <property type="entry name" value="LARGE RIBOSOMAL SUBUNIT PROTEIN UL3C"/>
    <property type="match status" value="1"/>
</dbReference>
<dbReference type="Pfam" id="PF00297">
    <property type="entry name" value="Ribosomal_L3"/>
    <property type="match status" value="1"/>
</dbReference>
<dbReference type="SUPFAM" id="SSF50447">
    <property type="entry name" value="Translation proteins"/>
    <property type="match status" value="1"/>
</dbReference>
<dbReference type="PROSITE" id="PS00474">
    <property type="entry name" value="RIBOSOMAL_L3"/>
    <property type="match status" value="1"/>
</dbReference>
<evidence type="ECO:0000255" key="1">
    <source>
        <dbReference type="HAMAP-Rule" id="MF_01325"/>
    </source>
</evidence>
<evidence type="ECO:0000305" key="2"/>
<proteinExistence type="inferred from homology"/>
<keyword id="KW-0488">Methylation</keyword>
<keyword id="KW-1185">Reference proteome</keyword>
<keyword id="KW-0687">Ribonucleoprotein</keyword>
<keyword id="KW-0689">Ribosomal protein</keyword>
<keyword id="KW-0694">RNA-binding</keyword>
<keyword id="KW-0699">rRNA-binding</keyword>
<accession>Q87E82</accession>
<protein>
    <recommendedName>
        <fullName evidence="1">Large ribosomal subunit protein uL3</fullName>
    </recommendedName>
    <alternativeName>
        <fullName evidence="2">50S ribosomal protein L3</fullName>
    </alternativeName>
</protein>